<comment type="function">
    <text evidence="1">Involved in unsaturated fatty acids biosynthesis. Catalyzes the dehydration of short chain beta-hydroxyacyl-ACPs and long chain saturated and unsaturated beta-hydroxyacyl-ACPs.</text>
</comment>
<comment type="catalytic activity">
    <reaction evidence="1">
        <text>a (3R)-hydroxyacyl-[ACP] = a (2E)-enoyl-[ACP] + H2O</text>
        <dbReference type="Rhea" id="RHEA:13097"/>
        <dbReference type="Rhea" id="RHEA-COMP:9925"/>
        <dbReference type="Rhea" id="RHEA-COMP:9945"/>
        <dbReference type="ChEBI" id="CHEBI:15377"/>
        <dbReference type="ChEBI" id="CHEBI:78784"/>
        <dbReference type="ChEBI" id="CHEBI:78827"/>
        <dbReference type="EC" id="4.2.1.59"/>
    </reaction>
</comment>
<comment type="subcellular location">
    <subcellularLocation>
        <location evidence="1">Cytoplasm</location>
    </subcellularLocation>
</comment>
<comment type="similarity">
    <text evidence="1">Belongs to the thioester dehydratase family. FabZ subfamily.</text>
</comment>
<evidence type="ECO:0000255" key="1">
    <source>
        <dbReference type="HAMAP-Rule" id="MF_00406"/>
    </source>
</evidence>
<sequence>MNEAATVLGTADIQEILKLLPHRYPFLLVDRIIEIDSDNSAIGIKNVTANEPHFTGHFPEKPIMPGVLLIEGMAQTAGAICARKTGGGSNLVYFMTIDNARFRKPVVPGDRVEFHVVKQKQRGNIWKFHCDAKVDGQLVAEADIGAMIVSKEDV</sequence>
<keyword id="KW-0963">Cytoplasm</keyword>
<keyword id="KW-0441">Lipid A biosynthesis</keyword>
<keyword id="KW-0444">Lipid biosynthesis</keyword>
<keyword id="KW-0443">Lipid metabolism</keyword>
<keyword id="KW-0456">Lyase</keyword>
<proteinExistence type="inferred from homology"/>
<accession>A6U8L1</accession>
<protein>
    <recommendedName>
        <fullName evidence="1">3-hydroxyacyl-[acyl-carrier-protein] dehydratase FabZ</fullName>
        <ecNumber evidence="1">4.2.1.59</ecNumber>
    </recommendedName>
    <alternativeName>
        <fullName evidence="1">(3R)-hydroxymyristoyl-[acyl-carrier-protein] dehydratase</fullName>
        <shortName evidence="1">(3R)-hydroxymyristoyl-ACP dehydrase</shortName>
    </alternativeName>
    <alternativeName>
        <fullName evidence="1">Beta-hydroxyacyl-ACP dehydratase</fullName>
    </alternativeName>
</protein>
<dbReference type="EC" id="4.2.1.59" evidence="1"/>
<dbReference type="EMBL" id="CP000738">
    <property type="protein sequence ID" value="ABR59991.1"/>
    <property type="molecule type" value="Genomic_DNA"/>
</dbReference>
<dbReference type="RefSeq" id="WP_011975310.1">
    <property type="nucleotide sequence ID" value="NC_009636.1"/>
</dbReference>
<dbReference type="RefSeq" id="YP_001326826.1">
    <property type="nucleotide sequence ID" value="NC_009636.1"/>
</dbReference>
<dbReference type="SMR" id="A6U8L1"/>
<dbReference type="STRING" id="366394.Smed_1140"/>
<dbReference type="GeneID" id="61612080"/>
<dbReference type="KEGG" id="smd:Smed_1140"/>
<dbReference type="PATRIC" id="fig|366394.8.peg.4265"/>
<dbReference type="eggNOG" id="COG0764">
    <property type="taxonomic scope" value="Bacteria"/>
</dbReference>
<dbReference type="HOGENOM" id="CLU_078912_1_2_5"/>
<dbReference type="OrthoDB" id="9772788at2"/>
<dbReference type="Proteomes" id="UP000001108">
    <property type="component" value="Chromosome"/>
</dbReference>
<dbReference type="GO" id="GO:0005737">
    <property type="term" value="C:cytoplasm"/>
    <property type="evidence" value="ECO:0007669"/>
    <property type="project" value="UniProtKB-SubCell"/>
</dbReference>
<dbReference type="GO" id="GO:0016020">
    <property type="term" value="C:membrane"/>
    <property type="evidence" value="ECO:0007669"/>
    <property type="project" value="GOC"/>
</dbReference>
<dbReference type="GO" id="GO:0019171">
    <property type="term" value="F:(3R)-hydroxyacyl-[acyl-carrier-protein] dehydratase activity"/>
    <property type="evidence" value="ECO:0007669"/>
    <property type="project" value="UniProtKB-EC"/>
</dbReference>
<dbReference type="GO" id="GO:0006633">
    <property type="term" value="P:fatty acid biosynthetic process"/>
    <property type="evidence" value="ECO:0007669"/>
    <property type="project" value="UniProtKB-UniRule"/>
</dbReference>
<dbReference type="GO" id="GO:0009245">
    <property type="term" value="P:lipid A biosynthetic process"/>
    <property type="evidence" value="ECO:0007669"/>
    <property type="project" value="UniProtKB-UniRule"/>
</dbReference>
<dbReference type="CDD" id="cd01288">
    <property type="entry name" value="FabZ"/>
    <property type="match status" value="1"/>
</dbReference>
<dbReference type="FunFam" id="3.10.129.10:FF:000001">
    <property type="entry name" value="3-hydroxyacyl-[acyl-carrier-protein] dehydratase FabZ"/>
    <property type="match status" value="1"/>
</dbReference>
<dbReference type="Gene3D" id="3.10.129.10">
    <property type="entry name" value="Hotdog Thioesterase"/>
    <property type="match status" value="1"/>
</dbReference>
<dbReference type="HAMAP" id="MF_00406">
    <property type="entry name" value="FabZ"/>
    <property type="match status" value="1"/>
</dbReference>
<dbReference type="InterPro" id="IPR013114">
    <property type="entry name" value="FabA_FabZ"/>
</dbReference>
<dbReference type="InterPro" id="IPR010084">
    <property type="entry name" value="FabZ"/>
</dbReference>
<dbReference type="InterPro" id="IPR029069">
    <property type="entry name" value="HotDog_dom_sf"/>
</dbReference>
<dbReference type="NCBIfam" id="TIGR01750">
    <property type="entry name" value="fabZ"/>
    <property type="match status" value="1"/>
</dbReference>
<dbReference type="NCBIfam" id="NF000582">
    <property type="entry name" value="PRK00006.1"/>
    <property type="match status" value="1"/>
</dbReference>
<dbReference type="PANTHER" id="PTHR30272">
    <property type="entry name" value="3-HYDROXYACYL-[ACYL-CARRIER-PROTEIN] DEHYDRATASE"/>
    <property type="match status" value="1"/>
</dbReference>
<dbReference type="PANTHER" id="PTHR30272:SF1">
    <property type="entry name" value="3-HYDROXYACYL-[ACYL-CARRIER-PROTEIN] DEHYDRATASE"/>
    <property type="match status" value="1"/>
</dbReference>
<dbReference type="Pfam" id="PF07977">
    <property type="entry name" value="FabA"/>
    <property type="match status" value="1"/>
</dbReference>
<dbReference type="SUPFAM" id="SSF54637">
    <property type="entry name" value="Thioesterase/thiol ester dehydrase-isomerase"/>
    <property type="match status" value="1"/>
</dbReference>
<organism>
    <name type="scientific">Sinorhizobium medicae (strain WSM419)</name>
    <name type="common">Ensifer medicae</name>
    <dbReference type="NCBI Taxonomy" id="366394"/>
    <lineage>
        <taxon>Bacteria</taxon>
        <taxon>Pseudomonadati</taxon>
        <taxon>Pseudomonadota</taxon>
        <taxon>Alphaproteobacteria</taxon>
        <taxon>Hyphomicrobiales</taxon>
        <taxon>Rhizobiaceae</taxon>
        <taxon>Sinorhizobium/Ensifer group</taxon>
        <taxon>Sinorhizobium</taxon>
    </lineage>
</organism>
<feature type="chain" id="PRO_1000049862" description="3-hydroxyacyl-[acyl-carrier-protein] dehydratase FabZ">
    <location>
        <begin position="1"/>
        <end position="154"/>
    </location>
</feature>
<feature type="active site" evidence="1">
    <location>
        <position position="57"/>
    </location>
</feature>
<reference key="1">
    <citation type="submission" date="2007-06" db="EMBL/GenBank/DDBJ databases">
        <title>Complete sequence of Sinorhizobium medicae WSM419 chromosome.</title>
        <authorList>
            <consortium name="US DOE Joint Genome Institute"/>
            <person name="Copeland A."/>
            <person name="Lucas S."/>
            <person name="Lapidus A."/>
            <person name="Barry K."/>
            <person name="Glavina del Rio T."/>
            <person name="Dalin E."/>
            <person name="Tice H."/>
            <person name="Pitluck S."/>
            <person name="Chain P."/>
            <person name="Malfatti S."/>
            <person name="Shin M."/>
            <person name="Vergez L."/>
            <person name="Schmutz J."/>
            <person name="Larimer F."/>
            <person name="Land M."/>
            <person name="Hauser L."/>
            <person name="Kyrpides N."/>
            <person name="Mikhailova N."/>
            <person name="Reeve W.G."/>
            <person name="Richardson P."/>
        </authorList>
    </citation>
    <scope>NUCLEOTIDE SEQUENCE [LARGE SCALE GENOMIC DNA]</scope>
    <source>
        <strain>WSM419</strain>
    </source>
</reference>
<name>FABZ_SINMW</name>
<gene>
    <name evidence="1" type="primary">fabZ</name>
    <name type="ordered locus">Smed_1140</name>
</gene>